<gene>
    <name evidence="1" type="primary">cdd</name>
    <name type="ordered locus">SSPA0627</name>
</gene>
<keyword id="KW-0378">Hydrolase</keyword>
<keyword id="KW-0479">Metal-binding</keyword>
<keyword id="KW-0862">Zinc</keyword>
<accession>B5BE52</accession>
<comment type="function">
    <text evidence="1">This enzyme scavenges exogenous and endogenous cytidine and 2'-deoxycytidine for UMP synthesis.</text>
</comment>
<comment type="catalytic activity">
    <reaction evidence="1">
        <text>cytidine + H2O + H(+) = uridine + NH4(+)</text>
        <dbReference type="Rhea" id="RHEA:16069"/>
        <dbReference type="ChEBI" id="CHEBI:15377"/>
        <dbReference type="ChEBI" id="CHEBI:15378"/>
        <dbReference type="ChEBI" id="CHEBI:16704"/>
        <dbReference type="ChEBI" id="CHEBI:17562"/>
        <dbReference type="ChEBI" id="CHEBI:28938"/>
        <dbReference type="EC" id="3.5.4.5"/>
    </reaction>
</comment>
<comment type="catalytic activity">
    <reaction evidence="1">
        <text>2'-deoxycytidine + H2O + H(+) = 2'-deoxyuridine + NH4(+)</text>
        <dbReference type="Rhea" id="RHEA:13433"/>
        <dbReference type="ChEBI" id="CHEBI:15377"/>
        <dbReference type="ChEBI" id="CHEBI:15378"/>
        <dbReference type="ChEBI" id="CHEBI:15698"/>
        <dbReference type="ChEBI" id="CHEBI:16450"/>
        <dbReference type="ChEBI" id="CHEBI:28938"/>
        <dbReference type="EC" id="3.5.4.5"/>
    </reaction>
</comment>
<comment type="cofactor">
    <cofactor evidence="1">
        <name>Zn(2+)</name>
        <dbReference type="ChEBI" id="CHEBI:29105"/>
    </cofactor>
    <text evidence="1">Binds 1 zinc ion.</text>
</comment>
<comment type="subunit">
    <text evidence="1">Homodimer.</text>
</comment>
<comment type="similarity">
    <text evidence="1">Belongs to the cytidine and deoxycytidylate deaminase family.</text>
</comment>
<protein>
    <recommendedName>
        <fullName evidence="1">Cytidine deaminase</fullName>
        <ecNumber evidence="1">3.5.4.5</ecNumber>
    </recommendedName>
    <alternativeName>
        <fullName evidence="1">Cytidine aminohydrolase</fullName>
        <shortName evidence="1">CDA</shortName>
    </alternativeName>
</protein>
<evidence type="ECO:0000255" key="1">
    <source>
        <dbReference type="HAMAP-Rule" id="MF_01558"/>
    </source>
</evidence>
<evidence type="ECO:0000255" key="2">
    <source>
        <dbReference type="PROSITE-ProRule" id="PRU01083"/>
    </source>
</evidence>
<dbReference type="EC" id="3.5.4.5" evidence="1"/>
<dbReference type="EMBL" id="FM200053">
    <property type="protein sequence ID" value="CAR58758.1"/>
    <property type="molecule type" value="Genomic_DNA"/>
</dbReference>
<dbReference type="RefSeq" id="WP_000553534.1">
    <property type="nucleotide sequence ID" value="NC_011147.1"/>
</dbReference>
<dbReference type="SMR" id="B5BE52"/>
<dbReference type="KEGG" id="sek:SSPA0627"/>
<dbReference type="HOGENOM" id="CLU_052424_0_0_6"/>
<dbReference type="Proteomes" id="UP000001869">
    <property type="component" value="Chromosome"/>
</dbReference>
<dbReference type="GO" id="GO:0005829">
    <property type="term" value="C:cytosol"/>
    <property type="evidence" value="ECO:0007669"/>
    <property type="project" value="TreeGrafter"/>
</dbReference>
<dbReference type="GO" id="GO:0004126">
    <property type="term" value="F:cytidine deaminase activity"/>
    <property type="evidence" value="ECO:0007669"/>
    <property type="project" value="UniProtKB-UniRule"/>
</dbReference>
<dbReference type="GO" id="GO:0042802">
    <property type="term" value="F:identical protein binding"/>
    <property type="evidence" value="ECO:0007669"/>
    <property type="project" value="UniProtKB-ARBA"/>
</dbReference>
<dbReference type="GO" id="GO:0008270">
    <property type="term" value="F:zinc ion binding"/>
    <property type="evidence" value="ECO:0007669"/>
    <property type="project" value="UniProtKB-UniRule"/>
</dbReference>
<dbReference type="GO" id="GO:0009972">
    <property type="term" value="P:cytidine deamination"/>
    <property type="evidence" value="ECO:0007669"/>
    <property type="project" value="InterPro"/>
</dbReference>
<dbReference type="CDD" id="cd01283">
    <property type="entry name" value="cytidine_deaminase"/>
    <property type="match status" value="2"/>
</dbReference>
<dbReference type="FunFam" id="3.40.140.10:FF:000006">
    <property type="entry name" value="Cytidine deaminase"/>
    <property type="match status" value="1"/>
</dbReference>
<dbReference type="FunFam" id="3.40.140.10:FF:000007">
    <property type="entry name" value="Cytidine deaminase"/>
    <property type="match status" value="1"/>
</dbReference>
<dbReference type="Gene3D" id="3.40.140.10">
    <property type="entry name" value="Cytidine Deaminase, domain 2"/>
    <property type="match status" value="2"/>
</dbReference>
<dbReference type="HAMAP" id="MF_01558">
    <property type="entry name" value="Cyt_deam"/>
    <property type="match status" value="1"/>
</dbReference>
<dbReference type="InterPro" id="IPR016192">
    <property type="entry name" value="APOBEC/CMP_deaminase_Zn-bd"/>
</dbReference>
<dbReference type="InterPro" id="IPR002125">
    <property type="entry name" value="CMP_dCMP_dom"/>
</dbReference>
<dbReference type="InterPro" id="IPR013171">
    <property type="entry name" value="Cyd/dCyd_deaminase_Zn-bd"/>
</dbReference>
<dbReference type="InterPro" id="IPR050202">
    <property type="entry name" value="Cyt/Deoxycyt_deaminase"/>
</dbReference>
<dbReference type="InterPro" id="IPR006263">
    <property type="entry name" value="Cyt_deam_dimer"/>
</dbReference>
<dbReference type="InterPro" id="IPR016193">
    <property type="entry name" value="Cytidine_deaminase-like"/>
</dbReference>
<dbReference type="InterPro" id="IPR020797">
    <property type="entry name" value="Cytidine_deaminase_bacteria"/>
</dbReference>
<dbReference type="NCBIfam" id="TIGR01355">
    <property type="entry name" value="cyt_deam_dimer"/>
    <property type="match status" value="1"/>
</dbReference>
<dbReference type="NCBIfam" id="NF006537">
    <property type="entry name" value="PRK09027.1"/>
    <property type="match status" value="1"/>
</dbReference>
<dbReference type="PANTHER" id="PTHR11644">
    <property type="entry name" value="CYTIDINE DEAMINASE"/>
    <property type="match status" value="1"/>
</dbReference>
<dbReference type="PANTHER" id="PTHR11644:SF2">
    <property type="entry name" value="CYTIDINE DEAMINASE"/>
    <property type="match status" value="1"/>
</dbReference>
<dbReference type="Pfam" id="PF00383">
    <property type="entry name" value="dCMP_cyt_deam_1"/>
    <property type="match status" value="1"/>
</dbReference>
<dbReference type="Pfam" id="PF08211">
    <property type="entry name" value="dCMP_cyt_deam_2"/>
    <property type="match status" value="1"/>
</dbReference>
<dbReference type="PIRSF" id="PIRSF006334">
    <property type="entry name" value="Cdd_plus_pseudo"/>
    <property type="match status" value="1"/>
</dbReference>
<dbReference type="SUPFAM" id="SSF53927">
    <property type="entry name" value="Cytidine deaminase-like"/>
    <property type="match status" value="2"/>
</dbReference>
<dbReference type="PROSITE" id="PS00903">
    <property type="entry name" value="CYT_DCMP_DEAMINASES_1"/>
    <property type="match status" value="1"/>
</dbReference>
<dbReference type="PROSITE" id="PS51747">
    <property type="entry name" value="CYT_DCMP_DEAMINASES_2"/>
    <property type="match status" value="2"/>
</dbReference>
<feature type="chain" id="PRO_1000147113" description="Cytidine deaminase">
    <location>
        <begin position="1"/>
        <end position="294"/>
    </location>
</feature>
<feature type="domain" description="CMP/dCMP-type deaminase 1" evidence="2">
    <location>
        <begin position="48"/>
        <end position="168"/>
    </location>
</feature>
<feature type="domain" description="CMP/dCMP-type deaminase 2" evidence="2">
    <location>
        <begin position="186"/>
        <end position="294"/>
    </location>
</feature>
<feature type="active site" description="Proton donor" evidence="1">
    <location>
        <position position="104"/>
    </location>
</feature>
<feature type="binding site" evidence="1">
    <location>
        <begin position="89"/>
        <end position="91"/>
    </location>
    <ligand>
        <name>substrate</name>
    </ligand>
</feature>
<feature type="binding site" evidence="1">
    <location>
        <position position="102"/>
    </location>
    <ligand>
        <name>Zn(2+)</name>
        <dbReference type="ChEBI" id="CHEBI:29105"/>
        <note>catalytic</note>
    </ligand>
</feature>
<feature type="binding site" evidence="1">
    <location>
        <position position="129"/>
    </location>
    <ligand>
        <name>Zn(2+)</name>
        <dbReference type="ChEBI" id="CHEBI:29105"/>
        <note>catalytic</note>
    </ligand>
</feature>
<feature type="binding site" evidence="1">
    <location>
        <position position="132"/>
    </location>
    <ligand>
        <name>Zn(2+)</name>
        <dbReference type="ChEBI" id="CHEBI:29105"/>
        <note>catalytic</note>
    </ligand>
</feature>
<proteinExistence type="inferred from homology"/>
<name>CDD_SALPK</name>
<organism>
    <name type="scientific">Salmonella paratyphi A (strain AKU_12601)</name>
    <dbReference type="NCBI Taxonomy" id="554290"/>
    <lineage>
        <taxon>Bacteria</taxon>
        <taxon>Pseudomonadati</taxon>
        <taxon>Pseudomonadota</taxon>
        <taxon>Gammaproteobacteria</taxon>
        <taxon>Enterobacterales</taxon>
        <taxon>Enterobacteriaceae</taxon>
        <taxon>Salmonella</taxon>
    </lineage>
</organism>
<sequence>MHPRFQTAFAQLADNLQSALAPILADHHFPAMLTAEQVSTLKNTARLDEDALAFALLPLAAACARTDLSHFNVGAIARGVSGNWYFGANMEFLGATMQQTVHAEQSAISHAWLRGEKGLAAVTVNYTPCGHCRQFMNELNSGLDLRIHLPGRAPHTLRDYLPDAFGPKDLEIKTLLMDEQDHGFTLTGDTLTQAAITAANKSHMPYSHSPSGVALECKDGRIFTGSYAENAAFNPTLPPLQGALNLLSLNGYDYADIQRAILAEKGDAALIQWDATAATLKALGCHNIDRVLLG</sequence>
<reference key="1">
    <citation type="journal article" date="2009" name="BMC Genomics">
        <title>Pseudogene accumulation in the evolutionary histories of Salmonella enterica serovars Paratyphi A and Typhi.</title>
        <authorList>
            <person name="Holt K.E."/>
            <person name="Thomson N.R."/>
            <person name="Wain J."/>
            <person name="Langridge G.C."/>
            <person name="Hasan R."/>
            <person name="Bhutta Z.A."/>
            <person name="Quail M.A."/>
            <person name="Norbertczak H."/>
            <person name="Walker D."/>
            <person name="Simmonds M."/>
            <person name="White B."/>
            <person name="Bason N."/>
            <person name="Mungall K."/>
            <person name="Dougan G."/>
            <person name="Parkhill J."/>
        </authorList>
    </citation>
    <scope>NUCLEOTIDE SEQUENCE [LARGE SCALE GENOMIC DNA]</scope>
    <source>
        <strain>AKU_12601</strain>
    </source>
</reference>